<organism>
    <name type="scientific">Cycas taitungensis</name>
    <name type="common">Prince sago</name>
    <name type="synonym">Cycas taiwaniana</name>
    <dbReference type="NCBI Taxonomy" id="54799"/>
    <lineage>
        <taxon>Eukaryota</taxon>
        <taxon>Viridiplantae</taxon>
        <taxon>Streptophyta</taxon>
        <taxon>Embryophyta</taxon>
        <taxon>Tracheophyta</taxon>
        <taxon>Spermatophyta</taxon>
        <taxon>Cycadidae</taxon>
        <taxon>Cycadales</taxon>
        <taxon>Cycadaceae</taxon>
        <taxon>Cycas</taxon>
    </lineage>
</organism>
<reference key="1">
    <citation type="journal article" date="2007" name="Mol. Biol. Evol.">
        <title>Chloroplast genome (cpDNA) of Cycas taitungensis and 56 cp protein-coding genes of Gnetum parvifolium: insights into cpDNA evolution and phylogeny of extant seed plants.</title>
        <authorList>
            <person name="Wu C.-S."/>
            <person name="Wang Y.-N."/>
            <person name="Liu S.-M."/>
            <person name="Chaw S.-M."/>
        </authorList>
    </citation>
    <scope>NUCLEOTIDE SEQUENCE [LARGE SCALE GENOMIC DNA]</scope>
</reference>
<geneLocation type="chloroplast"/>
<accession>A6H5P5</accession>
<feature type="chain" id="PRO_0000360247" description="NAD(P)H-quinone oxidoreductase subunit 6, chloroplastic">
    <location>
        <begin position="1"/>
        <end position="180"/>
    </location>
</feature>
<feature type="transmembrane region" description="Helical" evidence="2">
    <location>
        <begin position="10"/>
        <end position="30"/>
    </location>
</feature>
<feature type="transmembrane region" description="Helical" evidence="2">
    <location>
        <begin position="32"/>
        <end position="52"/>
    </location>
</feature>
<feature type="transmembrane region" description="Helical" evidence="2">
    <location>
        <begin position="57"/>
        <end position="77"/>
    </location>
</feature>
<feature type="transmembrane region" description="Helical" evidence="2">
    <location>
        <begin position="95"/>
        <end position="115"/>
    </location>
</feature>
<feature type="transmembrane region" description="Helical" evidence="2">
    <location>
        <begin position="153"/>
        <end position="173"/>
    </location>
</feature>
<sequence length="180" mass="19625">MDLPGPIRDILLVPLELGLILGGLEVVLLTNIIYSALSLGPVLVCISLLYILLNADFVAAAQILIYVGAVNVLIVFAVMLMNNQKYPNFVPLWTVGDGITLVVCTSLFCSLITIILNTSWSEISMTTKSNQILEQDLTNNVQRIGAHLSTDFFLPFELLSIILLVALVGAITIARREEIV</sequence>
<dbReference type="EC" id="7.1.1.-"/>
<dbReference type="EMBL" id="AP009339">
    <property type="protein sequence ID" value="BAF65011.1"/>
    <property type="molecule type" value="Genomic_DNA"/>
</dbReference>
<dbReference type="RefSeq" id="YP_001312269.1">
    <property type="nucleotide sequence ID" value="NC_009618.1"/>
</dbReference>
<dbReference type="SMR" id="A6H5P5"/>
<dbReference type="GeneID" id="5309581"/>
<dbReference type="GO" id="GO:0009535">
    <property type="term" value="C:chloroplast thylakoid membrane"/>
    <property type="evidence" value="ECO:0007669"/>
    <property type="project" value="UniProtKB-SubCell"/>
</dbReference>
<dbReference type="GO" id="GO:0008137">
    <property type="term" value="F:NADH dehydrogenase (ubiquinone) activity"/>
    <property type="evidence" value="ECO:0007669"/>
    <property type="project" value="InterPro"/>
</dbReference>
<dbReference type="GO" id="GO:0048038">
    <property type="term" value="F:quinone binding"/>
    <property type="evidence" value="ECO:0007669"/>
    <property type="project" value="UniProtKB-KW"/>
</dbReference>
<dbReference type="FunFam" id="1.20.120.1200:FF:000002">
    <property type="entry name" value="NAD(P)H-quinone oxidoreductase subunit 6, chloroplastic"/>
    <property type="match status" value="1"/>
</dbReference>
<dbReference type="Gene3D" id="1.20.120.1200">
    <property type="entry name" value="NADH-ubiquinone/plastoquinone oxidoreductase chain 6, subunit NuoJ"/>
    <property type="match status" value="1"/>
</dbReference>
<dbReference type="InterPro" id="IPR050290">
    <property type="entry name" value="NAD(P)H-Q_Oxidoreduct_6"/>
</dbReference>
<dbReference type="InterPro" id="IPR001457">
    <property type="entry name" value="NADH_UbQ/plastoQ_OxRdtase_su6"/>
</dbReference>
<dbReference type="InterPro" id="IPR042106">
    <property type="entry name" value="Nuo/plastoQ_OxRdtase_6_NuoJ"/>
</dbReference>
<dbReference type="NCBIfam" id="NF005163">
    <property type="entry name" value="PRK06638.1-3"/>
    <property type="match status" value="1"/>
</dbReference>
<dbReference type="PANTHER" id="PTHR48479">
    <property type="entry name" value="NAD(P)H-QUINONE OXIDOREDUCTASE SUBUNIT 6, CHLOROPLASTIC"/>
    <property type="match status" value="1"/>
</dbReference>
<dbReference type="PANTHER" id="PTHR48479:SF1">
    <property type="entry name" value="NAD(P)H-QUINONE OXIDOREDUCTASE SUBUNIT 6, CHLOROPLASTIC"/>
    <property type="match status" value="1"/>
</dbReference>
<dbReference type="Pfam" id="PF00499">
    <property type="entry name" value="Oxidored_q3"/>
    <property type="match status" value="1"/>
</dbReference>
<evidence type="ECO:0000250" key="1"/>
<evidence type="ECO:0000255" key="2"/>
<evidence type="ECO:0000305" key="3"/>
<comment type="function">
    <text evidence="1">NDH shuttles electrons from NAD(P)H:plastoquinone, via FMN and iron-sulfur (Fe-S) centers, to quinones in the photosynthetic chain and possibly in a chloroplast respiratory chain. The immediate electron acceptor for the enzyme in this species is believed to be plastoquinone. Couples the redox reaction to proton translocation, and thus conserves the redox energy in a proton gradient (By similarity).</text>
</comment>
<comment type="catalytic activity">
    <reaction>
        <text>a plastoquinone + NADH + (n+1) H(+)(in) = a plastoquinol + NAD(+) + n H(+)(out)</text>
        <dbReference type="Rhea" id="RHEA:42608"/>
        <dbReference type="Rhea" id="RHEA-COMP:9561"/>
        <dbReference type="Rhea" id="RHEA-COMP:9562"/>
        <dbReference type="ChEBI" id="CHEBI:15378"/>
        <dbReference type="ChEBI" id="CHEBI:17757"/>
        <dbReference type="ChEBI" id="CHEBI:57540"/>
        <dbReference type="ChEBI" id="CHEBI:57945"/>
        <dbReference type="ChEBI" id="CHEBI:62192"/>
    </reaction>
</comment>
<comment type="catalytic activity">
    <reaction>
        <text>a plastoquinone + NADPH + (n+1) H(+)(in) = a plastoquinol + NADP(+) + n H(+)(out)</text>
        <dbReference type="Rhea" id="RHEA:42612"/>
        <dbReference type="Rhea" id="RHEA-COMP:9561"/>
        <dbReference type="Rhea" id="RHEA-COMP:9562"/>
        <dbReference type="ChEBI" id="CHEBI:15378"/>
        <dbReference type="ChEBI" id="CHEBI:17757"/>
        <dbReference type="ChEBI" id="CHEBI:57783"/>
        <dbReference type="ChEBI" id="CHEBI:58349"/>
        <dbReference type="ChEBI" id="CHEBI:62192"/>
    </reaction>
</comment>
<comment type="subunit">
    <text evidence="1">NDH is composed of at least 16 different subunits, 5 of which are encoded in the nucleus.</text>
</comment>
<comment type="subcellular location">
    <subcellularLocation>
        <location evidence="1">Plastid</location>
        <location evidence="1">Chloroplast thylakoid membrane</location>
        <topology evidence="1">Multi-pass membrane protein</topology>
    </subcellularLocation>
</comment>
<comment type="similarity">
    <text evidence="3">Belongs to the complex I subunit 6 family.</text>
</comment>
<protein>
    <recommendedName>
        <fullName>NAD(P)H-quinone oxidoreductase subunit 6, chloroplastic</fullName>
        <ecNumber>7.1.1.-</ecNumber>
    </recommendedName>
    <alternativeName>
        <fullName>NAD(P)H dehydrogenase subunit 6</fullName>
    </alternativeName>
    <alternativeName>
        <fullName>NADH-plastoquinone oxidoreductase subunit 6</fullName>
    </alternativeName>
</protein>
<name>NU6C_CYCTA</name>
<gene>
    <name type="primary">ndhG</name>
</gene>
<keyword id="KW-0150">Chloroplast</keyword>
<keyword id="KW-0472">Membrane</keyword>
<keyword id="KW-0520">NAD</keyword>
<keyword id="KW-0521">NADP</keyword>
<keyword id="KW-0934">Plastid</keyword>
<keyword id="KW-0618">Plastoquinone</keyword>
<keyword id="KW-0874">Quinone</keyword>
<keyword id="KW-0793">Thylakoid</keyword>
<keyword id="KW-1278">Translocase</keyword>
<keyword id="KW-0812">Transmembrane</keyword>
<keyword id="KW-1133">Transmembrane helix</keyword>
<keyword id="KW-0813">Transport</keyword>
<proteinExistence type="inferred from homology"/>